<comment type="function">
    <text evidence="1">Catalyzes the ATP-dependent 2-thiolation of cytidine in position 32 of tRNA, to form 2-thiocytidine (s(2)C32). The sulfur atoms are provided by the cysteine/cysteine desulfurase (IscS) system.</text>
</comment>
<comment type="catalytic activity">
    <reaction evidence="1">
        <text>cytidine(32) in tRNA + S-sulfanyl-L-cysteinyl-[cysteine desulfurase] + AH2 + ATP = 2-thiocytidine(32) in tRNA + L-cysteinyl-[cysteine desulfurase] + A + AMP + diphosphate + H(+)</text>
        <dbReference type="Rhea" id="RHEA:57048"/>
        <dbReference type="Rhea" id="RHEA-COMP:10288"/>
        <dbReference type="Rhea" id="RHEA-COMP:12157"/>
        <dbReference type="Rhea" id="RHEA-COMP:12158"/>
        <dbReference type="Rhea" id="RHEA-COMP:14821"/>
        <dbReference type="ChEBI" id="CHEBI:13193"/>
        <dbReference type="ChEBI" id="CHEBI:15378"/>
        <dbReference type="ChEBI" id="CHEBI:17499"/>
        <dbReference type="ChEBI" id="CHEBI:29950"/>
        <dbReference type="ChEBI" id="CHEBI:30616"/>
        <dbReference type="ChEBI" id="CHEBI:33019"/>
        <dbReference type="ChEBI" id="CHEBI:61963"/>
        <dbReference type="ChEBI" id="CHEBI:82748"/>
        <dbReference type="ChEBI" id="CHEBI:141453"/>
        <dbReference type="ChEBI" id="CHEBI:456215"/>
    </reaction>
    <physiologicalReaction direction="left-to-right" evidence="1">
        <dbReference type="Rhea" id="RHEA:57049"/>
    </physiologicalReaction>
</comment>
<comment type="cofactor">
    <cofactor evidence="1">
        <name>Mg(2+)</name>
        <dbReference type="ChEBI" id="CHEBI:18420"/>
    </cofactor>
</comment>
<comment type="cofactor">
    <cofactor evidence="1">
        <name>[4Fe-4S] cluster</name>
        <dbReference type="ChEBI" id="CHEBI:49883"/>
    </cofactor>
    <text evidence="1">Binds 1 [4Fe-4S] cluster per subunit. The cluster is chelated by three Cys residues, the fourth Fe has a free coordination site that may bind a sulfur atom transferred from the persulfide of IscS.</text>
</comment>
<comment type="pathway">
    <text evidence="1">tRNA modification.</text>
</comment>
<comment type="subunit">
    <text evidence="1">Homodimer.</text>
</comment>
<comment type="subcellular location">
    <subcellularLocation>
        <location evidence="1">Cytoplasm</location>
    </subcellularLocation>
</comment>
<comment type="miscellaneous">
    <text evidence="1">The thiolation reaction likely consists of two steps: a first activation step by ATP to form an adenylated intermediate of the target base of tRNA, and a second nucleophilic substitution step of the sulfur (S) atom supplied by the hydrosulfide attached to the Fe-S cluster.</text>
</comment>
<comment type="similarity">
    <text evidence="1">Belongs to the TtcA family.</text>
</comment>
<organism>
    <name type="scientific">Francisella tularensis subsp. tularensis (strain SCHU S4 / Schu 4)</name>
    <dbReference type="NCBI Taxonomy" id="177416"/>
    <lineage>
        <taxon>Bacteria</taxon>
        <taxon>Pseudomonadati</taxon>
        <taxon>Pseudomonadota</taxon>
        <taxon>Gammaproteobacteria</taxon>
        <taxon>Thiotrichales</taxon>
        <taxon>Francisellaceae</taxon>
        <taxon>Francisella</taxon>
    </lineage>
</organism>
<dbReference type="EC" id="2.8.1.-" evidence="1"/>
<dbReference type="EMBL" id="AJ749949">
    <property type="protein sequence ID" value="CAG45675.1"/>
    <property type="molecule type" value="Genomic_DNA"/>
</dbReference>
<dbReference type="RefSeq" id="YP_170025.1">
    <property type="nucleotide sequence ID" value="NC_006570.2"/>
</dbReference>
<dbReference type="SMR" id="Q5NG17"/>
<dbReference type="STRING" id="177416.FTT_1042"/>
<dbReference type="DNASU" id="3192041"/>
<dbReference type="EnsemblBacteria" id="CAG45675">
    <property type="protein sequence ID" value="CAG45675"/>
    <property type="gene ID" value="FTT_1042"/>
</dbReference>
<dbReference type="KEGG" id="ftu:FTT_1042"/>
<dbReference type="eggNOG" id="COG0037">
    <property type="taxonomic scope" value="Bacteria"/>
</dbReference>
<dbReference type="OrthoDB" id="9801054at2"/>
<dbReference type="Proteomes" id="UP000001174">
    <property type="component" value="Chromosome"/>
</dbReference>
<dbReference type="GO" id="GO:0005737">
    <property type="term" value="C:cytoplasm"/>
    <property type="evidence" value="ECO:0007669"/>
    <property type="project" value="UniProtKB-SubCell"/>
</dbReference>
<dbReference type="GO" id="GO:0051539">
    <property type="term" value="F:4 iron, 4 sulfur cluster binding"/>
    <property type="evidence" value="ECO:0007669"/>
    <property type="project" value="UniProtKB-UniRule"/>
</dbReference>
<dbReference type="GO" id="GO:0005524">
    <property type="term" value="F:ATP binding"/>
    <property type="evidence" value="ECO:0007669"/>
    <property type="project" value="UniProtKB-UniRule"/>
</dbReference>
<dbReference type="GO" id="GO:0000287">
    <property type="term" value="F:magnesium ion binding"/>
    <property type="evidence" value="ECO:0007669"/>
    <property type="project" value="UniProtKB-UniRule"/>
</dbReference>
<dbReference type="GO" id="GO:0016783">
    <property type="term" value="F:sulfurtransferase activity"/>
    <property type="evidence" value="ECO:0007669"/>
    <property type="project" value="UniProtKB-UniRule"/>
</dbReference>
<dbReference type="GO" id="GO:0000049">
    <property type="term" value="F:tRNA binding"/>
    <property type="evidence" value="ECO:0007669"/>
    <property type="project" value="UniProtKB-KW"/>
</dbReference>
<dbReference type="GO" id="GO:0034227">
    <property type="term" value="P:tRNA thio-modification"/>
    <property type="evidence" value="ECO:0007669"/>
    <property type="project" value="UniProtKB-UniRule"/>
</dbReference>
<dbReference type="CDD" id="cd24138">
    <property type="entry name" value="TtcA-like"/>
    <property type="match status" value="1"/>
</dbReference>
<dbReference type="Gene3D" id="3.40.50.620">
    <property type="entry name" value="HUPs"/>
    <property type="match status" value="1"/>
</dbReference>
<dbReference type="HAMAP" id="MF_01850">
    <property type="entry name" value="TtcA"/>
    <property type="match status" value="1"/>
</dbReference>
<dbReference type="InterPro" id="IPR014729">
    <property type="entry name" value="Rossmann-like_a/b/a_fold"/>
</dbReference>
<dbReference type="InterPro" id="IPR011063">
    <property type="entry name" value="TilS/TtcA_N"/>
</dbReference>
<dbReference type="InterPro" id="IPR012089">
    <property type="entry name" value="tRNA_Cyd_32_2_STrfase"/>
</dbReference>
<dbReference type="InterPro" id="IPR035107">
    <property type="entry name" value="tRNA_thiolation_TtcA_Ctu1"/>
</dbReference>
<dbReference type="NCBIfam" id="NF007972">
    <property type="entry name" value="PRK10696.1"/>
    <property type="match status" value="1"/>
</dbReference>
<dbReference type="PANTHER" id="PTHR43686:SF1">
    <property type="entry name" value="AMINOTRAN_5 DOMAIN-CONTAINING PROTEIN"/>
    <property type="match status" value="1"/>
</dbReference>
<dbReference type="PANTHER" id="PTHR43686">
    <property type="entry name" value="SULFURTRANSFERASE-RELATED"/>
    <property type="match status" value="1"/>
</dbReference>
<dbReference type="Pfam" id="PF01171">
    <property type="entry name" value="ATP_bind_3"/>
    <property type="match status" value="1"/>
</dbReference>
<dbReference type="PIRSF" id="PIRSF004976">
    <property type="entry name" value="ATPase_YdaO"/>
    <property type="match status" value="1"/>
</dbReference>
<dbReference type="SUPFAM" id="SSF52402">
    <property type="entry name" value="Adenine nucleotide alpha hydrolases-like"/>
    <property type="match status" value="1"/>
</dbReference>
<proteinExistence type="inferred from homology"/>
<evidence type="ECO:0000255" key="1">
    <source>
        <dbReference type="HAMAP-Rule" id="MF_01850"/>
    </source>
</evidence>
<feature type="chain" id="PRO_0000348738" description="tRNA-cytidine(32) 2-sulfurtransferase 1">
    <location>
        <begin position="1"/>
        <end position="267"/>
    </location>
</feature>
<feature type="short sequence motif" description="PP-loop motif" evidence="1">
    <location>
        <begin position="42"/>
        <end position="47"/>
    </location>
</feature>
<feature type="binding site" evidence="1">
    <location>
        <position position="117"/>
    </location>
    <ligand>
        <name>[4Fe-4S] cluster</name>
        <dbReference type="ChEBI" id="CHEBI:49883"/>
    </ligand>
</feature>
<feature type="binding site" evidence="1">
    <location>
        <position position="120"/>
    </location>
    <ligand>
        <name>[4Fe-4S] cluster</name>
        <dbReference type="ChEBI" id="CHEBI:49883"/>
    </ligand>
</feature>
<feature type="binding site" evidence="1">
    <location>
        <position position="208"/>
    </location>
    <ligand>
        <name>[4Fe-4S] cluster</name>
        <dbReference type="ChEBI" id="CHEBI:49883"/>
    </ligand>
</feature>
<keyword id="KW-0004">4Fe-4S</keyword>
<keyword id="KW-0067">ATP-binding</keyword>
<keyword id="KW-0963">Cytoplasm</keyword>
<keyword id="KW-0408">Iron</keyword>
<keyword id="KW-0411">Iron-sulfur</keyword>
<keyword id="KW-0460">Magnesium</keyword>
<keyword id="KW-0479">Metal-binding</keyword>
<keyword id="KW-0547">Nucleotide-binding</keyword>
<keyword id="KW-1185">Reference proteome</keyword>
<keyword id="KW-0694">RNA-binding</keyword>
<keyword id="KW-0808">Transferase</keyword>
<keyword id="KW-0819">tRNA processing</keyword>
<keyword id="KW-0820">tRNA-binding</keyword>
<protein>
    <recommendedName>
        <fullName evidence="1">tRNA-cytidine(32) 2-sulfurtransferase 1</fullName>
        <ecNumber evidence="1">2.8.1.-</ecNumber>
    </recommendedName>
    <alternativeName>
        <fullName evidence="1">Two-thiocytidine biosynthesis protein A 1</fullName>
    </alternativeName>
    <alternativeName>
        <fullName evidence="1">tRNA 2-thiocytidine biosynthesis protein TtcA 1</fullName>
    </alternativeName>
</protein>
<sequence>MTNNTDKQTLKKLERQILRKTAQAINQYNMIEDGDKIMVCLSGGKDSYCLLEMLLLLQKKAPISFEIIAVNLDQKQPGFPEEVLPNYLKNKGVEFHIIERDTYSIVKRVIPEGKTTCGLCSRMRRGILYDFAEENNVTKVALGHHRDDIIETFFLNLFYNGSIKAMPAKLLSDDKRNIVIRPLAFVSEKETLEYSQLKEFPIIPCNLCGSQDNLQRVFIKDMLNRWEQNNPERKNVIFKALSNISPSQMLDKELFDFINISKDDIQR</sequence>
<gene>
    <name evidence="1" type="primary">ttcA1</name>
    <name type="ordered locus">FTT_1042</name>
</gene>
<accession>Q5NG17</accession>
<name>TTCA1_FRATT</name>
<reference key="1">
    <citation type="journal article" date="2005" name="Nat. Genet.">
        <title>The complete genome sequence of Francisella tularensis, the causative agent of tularemia.</title>
        <authorList>
            <person name="Larsson P."/>
            <person name="Oyston P.C.F."/>
            <person name="Chain P."/>
            <person name="Chu M.C."/>
            <person name="Duffield M."/>
            <person name="Fuxelius H.-H."/>
            <person name="Garcia E."/>
            <person name="Haelltorp G."/>
            <person name="Johansson D."/>
            <person name="Isherwood K.E."/>
            <person name="Karp P.D."/>
            <person name="Larsson E."/>
            <person name="Liu Y."/>
            <person name="Michell S."/>
            <person name="Prior J."/>
            <person name="Prior R."/>
            <person name="Malfatti S."/>
            <person name="Sjoestedt A."/>
            <person name="Svensson K."/>
            <person name="Thompson N."/>
            <person name="Vergez L."/>
            <person name="Wagg J.K."/>
            <person name="Wren B.W."/>
            <person name="Lindler L.E."/>
            <person name="Andersson S.G.E."/>
            <person name="Forsman M."/>
            <person name="Titball R.W."/>
        </authorList>
    </citation>
    <scope>NUCLEOTIDE SEQUENCE [LARGE SCALE GENOMIC DNA]</scope>
    <source>
        <strain>SCHU S4 / Schu 4</strain>
    </source>
</reference>